<feature type="chain" id="PRO_0000122271" description="Small ribosomal subunit protein eS8">
    <location>
        <begin position="1"/>
        <end position="127"/>
    </location>
</feature>
<feature type="region of interest" description="Disordered" evidence="2">
    <location>
        <begin position="1"/>
        <end position="33"/>
    </location>
</feature>
<feature type="strand" evidence="4">
    <location>
        <begin position="62"/>
        <end position="65"/>
    </location>
</feature>
<feature type="turn" evidence="4">
    <location>
        <begin position="67"/>
        <end position="69"/>
    </location>
</feature>
<feature type="strand" evidence="4">
    <location>
        <begin position="72"/>
        <end position="75"/>
    </location>
</feature>
<feature type="strand" evidence="4">
    <location>
        <begin position="77"/>
        <end position="81"/>
    </location>
</feature>
<feature type="strand" evidence="4">
    <location>
        <begin position="100"/>
        <end position="110"/>
    </location>
</feature>
<feature type="helix" evidence="4">
    <location>
        <begin position="116"/>
        <end position="118"/>
    </location>
</feature>
<feature type="strand" evidence="4">
    <location>
        <begin position="121"/>
        <end position="125"/>
    </location>
</feature>
<reference key="1">
    <citation type="journal article" date="1997" name="J. Bacteriol.">
        <title>Complete genome sequence of Methanobacterium thermoautotrophicum deltaH: functional analysis and comparative genomics.</title>
        <authorList>
            <person name="Smith D.R."/>
            <person name="Doucette-Stamm L.A."/>
            <person name="Deloughery C."/>
            <person name="Lee H.-M."/>
            <person name="Dubois J."/>
            <person name="Aldredge T."/>
            <person name="Bashirzadeh R."/>
            <person name="Blakely D."/>
            <person name="Cook R."/>
            <person name="Gilbert K."/>
            <person name="Harrison D."/>
            <person name="Hoang L."/>
            <person name="Keagle P."/>
            <person name="Lumm W."/>
            <person name="Pothier B."/>
            <person name="Qiu D."/>
            <person name="Spadafora R."/>
            <person name="Vicare R."/>
            <person name="Wang Y."/>
            <person name="Wierzbowski J."/>
            <person name="Gibson R."/>
            <person name="Jiwani N."/>
            <person name="Caruso A."/>
            <person name="Bush D."/>
            <person name="Safer H."/>
            <person name="Patwell D."/>
            <person name="Prabhakar S."/>
            <person name="McDougall S."/>
            <person name="Shimer G."/>
            <person name="Goyal A."/>
            <person name="Pietrovski S."/>
            <person name="Church G.M."/>
            <person name="Daniels C.J."/>
            <person name="Mao J.-I."/>
            <person name="Rice P."/>
            <person name="Noelling J."/>
            <person name="Reeve J.N."/>
        </authorList>
    </citation>
    <scope>NUCLEOTIDE SEQUENCE [LARGE SCALE GENOMIC DNA]</scope>
    <source>
        <strain>ATCC 29096 / DSM 1053 / JCM 10044 / NBRC 100330 / Delta H</strain>
    </source>
</reference>
<organism>
    <name type="scientific">Methanothermobacter thermautotrophicus (strain ATCC 29096 / DSM 1053 / JCM 10044 / NBRC 100330 / Delta H)</name>
    <name type="common">Methanobacterium thermoautotrophicum</name>
    <dbReference type="NCBI Taxonomy" id="187420"/>
    <lineage>
        <taxon>Archaea</taxon>
        <taxon>Methanobacteriati</taxon>
        <taxon>Methanobacteriota</taxon>
        <taxon>Methanomada group</taxon>
        <taxon>Methanobacteria</taxon>
        <taxon>Methanobacteriales</taxon>
        <taxon>Methanobacteriaceae</taxon>
        <taxon>Methanothermobacter</taxon>
    </lineage>
</organism>
<name>RS8E_METTH</name>
<comment type="subunit">
    <text evidence="1">Part of the 30S ribosomal subunit.</text>
</comment>
<comment type="similarity">
    <text evidence="3">Belongs to the eukaryotic ribosomal protein eS8 family.</text>
</comment>
<keyword id="KW-0002">3D-structure</keyword>
<keyword id="KW-1185">Reference proteome</keyword>
<keyword id="KW-0687">Ribonucleoprotein</keyword>
<keyword id="KW-0689">Ribosomal protein</keyword>
<dbReference type="EMBL" id="AE000666">
    <property type="protein sequence ID" value="AAB84713.1"/>
    <property type="molecule type" value="Genomic_DNA"/>
</dbReference>
<dbReference type="PIR" id="D69125">
    <property type="entry name" value="D69125"/>
</dbReference>
<dbReference type="RefSeq" id="WP_010875846.1">
    <property type="nucleotide sequence ID" value="NC_000916.1"/>
</dbReference>
<dbReference type="PDB" id="2KCP">
    <property type="method" value="NMR"/>
    <property type="chains" value="A=38-127"/>
</dbReference>
<dbReference type="PDB" id="2KCY">
    <property type="method" value="NMR"/>
    <property type="chains" value="A=38-127"/>
</dbReference>
<dbReference type="PDBsum" id="2KCP"/>
<dbReference type="PDBsum" id="2KCY"/>
<dbReference type="SMR" id="O26309"/>
<dbReference type="FunCoup" id="O26309">
    <property type="interactions" value="121"/>
</dbReference>
<dbReference type="STRING" id="187420.MTH_207"/>
<dbReference type="PaxDb" id="187420-MTH_207"/>
<dbReference type="DNASU" id="1470168"/>
<dbReference type="EnsemblBacteria" id="AAB84713">
    <property type="protein sequence ID" value="AAB84713"/>
    <property type="gene ID" value="MTH_207"/>
</dbReference>
<dbReference type="KEGG" id="mth:MTH_207"/>
<dbReference type="PATRIC" id="fig|187420.15.peg.176"/>
<dbReference type="HOGENOM" id="CLU_080597_2_1_2"/>
<dbReference type="InParanoid" id="O26309"/>
<dbReference type="EvolutionaryTrace" id="O26309"/>
<dbReference type="Proteomes" id="UP000005223">
    <property type="component" value="Chromosome"/>
</dbReference>
<dbReference type="GO" id="GO:1990904">
    <property type="term" value="C:ribonucleoprotein complex"/>
    <property type="evidence" value="ECO:0007669"/>
    <property type="project" value="UniProtKB-KW"/>
</dbReference>
<dbReference type="GO" id="GO:0005840">
    <property type="term" value="C:ribosome"/>
    <property type="evidence" value="ECO:0007669"/>
    <property type="project" value="UniProtKB-KW"/>
</dbReference>
<dbReference type="GO" id="GO:0003735">
    <property type="term" value="F:structural constituent of ribosome"/>
    <property type="evidence" value="ECO:0007669"/>
    <property type="project" value="InterPro"/>
</dbReference>
<dbReference type="GO" id="GO:0006412">
    <property type="term" value="P:translation"/>
    <property type="evidence" value="ECO:0007669"/>
    <property type="project" value="UniProtKB-UniRule"/>
</dbReference>
<dbReference type="CDD" id="cd11382">
    <property type="entry name" value="Ribosomal_S8e"/>
    <property type="match status" value="1"/>
</dbReference>
<dbReference type="Gene3D" id="2.40.10.310">
    <property type="match status" value="1"/>
</dbReference>
<dbReference type="HAMAP" id="MF_00029">
    <property type="entry name" value="Ribosomal_eS8"/>
    <property type="match status" value="1"/>
</dbReference>
<dbReference type="InterPro" id="IPR001047">
    <property type="entry name" value="Ribosomal_eS8"/>
</dbReference>
<dbReference type="InterPro" id="IPR018283">
    <property type="entry name" value="Ribosomal_eS8_CS"/>
</dbReference>
<dbReference type="InterPro" id="IPR020919">
    <property type="entry name" value="Ribosomal_protein_eS8_arc"/>
</dbReference>
<dbReference type="InterPro" id="IPR022309">
    <property type="entry name" value="Ribosomal_Se8/biogenesis_NSA2"/>
</dbReference>
<dbReference type="NCBIfam" id="TIGR00307">
    <property type="entry name" value="eS8"/>
    <property type="match status" value="1"/>
</dbReference>
<dbReference type="PANTHER" id="PTHR10394">
    <property type="entry name" value="40S RIBOSOMAL PROTEIN S8"/>
    <property type="match status" value="1"/>
</dbReference>
<dbReference type="Pfam" id="PF01201">
    <property type="entry name" value="Ribosomal_S8e"/>
    <property type="match status" value="1"/>
</dbReference>
<dbReference type="PROSITE" id="PS01193">
    <property type="entry name" value="RIBOSOMAL_S8E"/>
    <property type="match status" value="1"/>
</dbReference>
<accession>O26309</accession>
<evidence type="ECO:0000250" key="1"/>
<evidence type="ECO:0000256" key="2">
    <source>
        <dbReference type="SAM" id="MobiDB-lite"/>
    </source>
</evidence>
<evidence type="ECO:0000305" key="3"/>
<evidence type="ECO:0007829" key="4">
    <source>
        <dbReference type="PDB" id="2KCP"/>
    </source>
</evidence>
<proteinExistence type="evidence at protein level"/>
<protein>
    <recommendedName>
        <fullName evidence="3">Small ribosomal subunit protein eS8</fullName>
    </recommendedName>
    <alternativeName>
        <fullName>30S ribosomal protein S8e</fullName>
    </alternativeName>
</protein>
<gene>
    <name type="primary">rps8e</name>
    <name type="ordered locus">MTH_207</name>
</gene>
<sequence length="127" mass="14155">MAIWQGKSMKKPSGGRAKMNRGKRKYELGREPAETKIGDRRVRLIRTRGGNTKVRLASDTRINVVDPETGKVEIAEIRNVVENTANPHFVRRNIITRGAVVETNLGNVRVTSRPGQDGVINGVLIRE</sequence>